<reference key="1">
    <citation type="journal article" date="2000" name="Nature">
        <title>Sequence and analysis of chromosome 3 of the plant Arabidopsis thaliana.</title>
        <authorList>
            <person name="Salanoubat M."/>
            <person name="Lemcke K."/>
            <person name="Rieger M."/>
            <person name="Ansorge W."/>
            <person name="Unseld M."/>
            <person name="Fartmann B."/>
            <person name="Valle G."/>
            <person name="Bloecker H."/>
            <person name="Perez-Alonso M."/>
            <person name="Obermaier B."/>
            <person name="Delseny M."/>
            <person name="Boutry M."/>
            <person name="Grivell L.A."/>
            <person name="Mache R."/>
            <person name="Puigdomenech P."/>
            <person name="De Simone V."/>
            <person name="Choisne N."/>
            <person name="Artiguenave F."/>
            <person name="Robert C."/>
            <person name="Brottier P."/>
            <person name="Wincker P."/>
            <person name="Cattolico L."/>
            <person name="Weissenbach J."/>
            <person name="Saurin W."/>
            <person name="Quetier F."/>
            <person name="Schaefer M."/>
            <person name="Mueller-Auer S."/>
            <person name="Gabel C."/>
            <person name="Fuchs M."/>
            <person name="Benes V."/>
            <person name="Wurmbach E."/>
            <person name="Drzonek H."/>
            <person name="Erfle H."/>
            <person name="Jordan N."/>
            <person name="Bangert S."/>
            <person name="Wiedelmann R."/>
            <person name="Kranz H."/>
            <person name="Voss H."/>
            <person name="Holland R."/>
            <person name="Brandt P."/>
            <person name="Nyakatura G."/>
            <person name="Vezzi A."/>
            <person name="D'Angelo M."/>
            <person name="Pallavicini A."/>
            <person name="Toppo S."/>
            <person name="Simionati B."/>
            <person name="Conrad A."/>
            <person name="Hornischer K."/>
            <person name="Kauer G."/>
            <person name="Loehnert T.-H."/>
            <person name="Nordsiek G."/>
            <person name="Reichelt J."/>
            <person name="Scharfe M."/>
            <person name="Schoen O."/>
            <person name="Bargues M."/>
            <person name="Terol J."/>
            <person name="Climent J."/>
            <person name="Navarro P."/>
            <person name="Collado C."/>
            <person name="Perez-Perez A."/>
            <person name="Ottenwaelder B."/>
            <person name="Duchemin D."/>
            <person name="Cooke R."/>
            <person name="Laudie M."/>
            <person name="Berger-Llauro C."/>
            <person name="Purnelle B."/>
            <person name="Masuy D."/>
            <person name="de Haan M."/>
            <person name="Maarse A.C."/>
            <person name="Alcaraz J.-P."/>
            <person name="Cottet A."/>
            <person name="Casacuberta E."/>
            <person name="Monfort A."/>
            <person name="Argiriou A."/>
            <person name="Flores M."/>
            <person name="Liguori R."/>
            <person name="Vitale D."/>
            <person name="Mannhaupt G."/>
            <person name="Haase D."/>
            <person name="Schoof H."/>
            <person name="Rudd S."/>
            <person name="Zaccaria P."/>
            <person name="Mewes H.-W."/>
            <person name="Mayer K.F.X."/>
            <person name="Kaul S."/>
            <person name="Town C.D."/>
            <person name="Koo H.L."/>
            <person name="Tallon L.J."/>
            <person name="Jenkins J."/>
            <person name="Rooney T."/>
            <person name="Rizzo M."/>
            <person name="Walts A."/>
            <person name="Utterback T."/>
            <person name="Fujii C.Y."/>
            <person name="Shea T.P."/>
            <person name="Creasy T.H."/>
            <person name="Haas B."/>
            <person name="Maiti R."/>
            <person name="Wu D."/>
            <person name="Peterson J."/>
            <person name="Van Aken S."/>
            <person name="Pai G."/>
            <person name="Militscher J."/>
            <person name="Sellers P."/>
            <person name="Gill J.E."/>
            <person name="Feldblyum T.V."/>
            <person name="Preuss D."/>
            <person name="Lin X."/>
            <person name="Nierman W.C."/>
            <person name="Salzberg S.L."/>
            <person name="White O."/>
            <person name="Venter J.C."/>
            <person name="Fraser C.M."/>
            <person name="Kaneko T."/>
            <person name="Nakamura Y."/>
            <person name="Sato S."/>
            <person name="Kato T."/>
            <person name="Asamizu E."/>
            <person name="Sasamoto S."/>
            <person name="Kimura T."/>
            <person name="Idesawa K."/>
            <person name="Kawashima K."/>
            <person name="Kishida Y."/>
            <person name="Kiyokawa C."/>
            <person name="Kohara M."/>
            <person name="Matsumoto M."/>
            <person name="Matsuno A."/>
            <person name="Muraki A."/>
            <person name="Nakayama S."/>
            <person name="Nakazaki N."/>
            <person name="Shinpo S."/>
            <person name="Takeuchi C."/>
            <person name="Wada T."/>
            <person name="Watanabe A."/>
            <person name="Yamada M."/>
            <person name="Yasuda M."/>
            <person name="Tabata S."/>
        </authorList>
    </citation>
    <scope>NUCLEOTIDE SEQUENCE [LARGE SCALE GENOMIC DNA]</scope>
    <source>
        <strain>cv. Columbia</strain>
    </source>
</reference>
<reference key="2">
    <citation type="journal article" date="2017" name="Plant J.">
        <title>Araport11: a complete reannotation of the Arabidopsis thaliana reference genome.</title>
        <authorList>
            <person name="Cheng C.Y."/>
            <person name="Krishnakumar V."/>
            <person name="Chan A.P."/>
            <person name="Thibaud-Nissen F."/>
            <person name="Schobel S."/>
            <person name="Town C.D."/>
        </authorList>
    </citation>
    <scope>GENOME REANNOTATION</scope>
    <source>
        <strain>cv. Columbia</strain>
    </source>
</reference>
<reference key="3">
    <citation type="journal article" date="2003" name="Science">
        <title>Empirical analysis of transcriptional activity in the Arabidopsis genome.</title>
        <authorList>
            <person name="Yamada K."/>
            <person name="Lim J."/>
            <person name="Dale J.M."/>
            <person name="Chen H."/>
            <person name="Shinn P."/>
            <person name="Palm C.J."/>
            <person name="Southwick A.M."/>
            <person name="Wu H.C."/>
            <person name="Kim C.J."/>
            <person name="Nguyen M."/>
            <person name="Pham P.K."/>
            <person name="Cheuk R.F."/>
            <person name="Karlin-Newmann G."/>
            <person name="Liu S.X."/>
            <person name="Lam B."/>
            <person name="Sakano H."/>
            <person name="Wu T."/>
            <person name="Yu G."/>
            <person name="Miranda M."/>
            <person name="Quach H.L."/>
            <person name="Tripp M."/>
            <person name="Chang C.H."/>
            <person name="Lee J.M."/>
            <person name="Toriumi M.J."/>
            <person name="Chan M.M."/>
            <person name="Tang C.C."/>
            <person name="Onodera C.S."/>
            <person name="Deng J.M."/>
            <person name="Akiyama K."/>
            <person name="Ansari Y."/>
            <person name="Arakawa T."/>
            <person name="Banh J."/>
            <person name="Banno F."/>
            <person name="Bowser L."/>
            <person name="Brooks S.Y."/>
            <person name="Carninci P."/>
            <person name="Chao Q."/>
            <person name="Choy N."/>
            <person name="Enju A."/>
            <person name="Goldsmith A.D."/>
            <person name="Gurjal M."/>
            <person name="Hansen N.F."/>
            <person name="Hayashizaki Y."/>
            <person name="Johnson-Hopson C."/>
            <person name="Hsuan V.W."/>
            <person name="Iida K."/>
            <person name="Karnes M."/>
            <person name="Khan S."/>
            <person name="Koesema E."/>
            <person name="Ishida J."/>
            <person name="Jiang P.X."/>
            <person name="Jones T."/>
            <person name="Kawai J."/>
            <person name="Kamiya A."/>
            <person name="Meyers C."/>
            <person name="Nakajima M."/>
            <person name="Narusaka M."/>
            <person name="Seki M."/>
            <person name="Sakurai T."/>
            <person name="Satou M."/>
            <person name="Tamse R."/>
            <person name="Vaysberg M."/>
            <person name="Wallender E.K."/>
            <person name="Wong C."/>
            <person name="Yamamura Y."/>
            <person name="Yuan S."/>
            <person name="Shinozaki K."/>
            <person name="Davis R.W."/>
            <person name="Theologis A."/>
            <person name="Ecker J.R."/>
        </authorList>
    </citation>
    <scope>NUCLEOTIDE SEQUENCE [LARGE SCALE MRNA]</scope>
    <source>
        <strain>cv. Columbia</strain>
    </source>
</reference>
<reference key="4">
    <citation type="journal article" date="2001" name="Mol. Biol. Cell">
        <title>Adaptins: the final recount.</title>
        <authorList>
            <person name="Boehm M."/>
            <person name="Bonifacino J.S."/>
        </authorList>
    </citation>
    <scope>GENE FAMILY</scope>
    <scope>REVIEW</scope>
</reference>
<reference key="5">
    <citation type="journal article" date="2009" name="Plant Cell Physiol.">
        <title>ZIP genes encode proteins involved in membrane trafficking of the TGN-PVC/vacuoles.</title>
        <authorList>
            <person name="Niihama M."/>
            <person name="Takemoto N."/>
            <person name="Hashiguchi Y."/>
            <person name="Tasaka M."/>
            <person name="Morita M.T."/>
        </authorList>
    </citation>
    <scope>DISRUPTION PHENOTYPE</scope>
</reference>
<reference key="6">
    <citation type="journal article" date="2011" name="Cell Res.">
        <title>The AP-3 adaptor complex is required for vacuolar function in Arabidopsis.</title>
        <authorList>
            <person name="Zwiewka M."/>
            <person name="Feraru E."/>
            <person name="Moeller B."/>
            <person name="Hwang I."/>
            <person name="Feraru M.I."/>
            <person name="Kleine-Vehn J."/>
            <person name="Weijers D."/>
            <person name="Friml J."/>
        </authorList>
    </citation>
    <scope>COMPONENT OF THE AP-3 COMPLEX</scope>
</reference>
<proteinExistence type="evidence at transcript level"/>
<dbReference type="EMBL" id="AL049862">
    <property type="protein sequence ID" value="CAB42915.1"/>
    <property type="status" value="ALT_SEQ"/>
    <property type="molecule type" value="Genomic_DNA"/>
</dbReference>
<dbReference type="EMBL" id="CP002686">
    <property type="protein sequence ID" value="AEE78719.1"/>
    <property type="molecule type" value="Genomic_DNA"/>
</dbReference>
<dbReference type="EMBL" id="AY065287">
    <property type="protein sequence ID" value="AAL38763.1"/>
    <property type="molecule type" value="mRNA"/>
</dbReference>
<dbReference type="EMBL" id="AY096709">
    <property type="protein sequence ID" value="AAM20343.1"/>
    <property type="molecule type" value="mRNA"/>
</dbReference>
<dbReference type="PIR" id="T08407">
    <property type="entry name" value="T08407"/>
</dbReference>
<dbReference type="RefSeq" id="NP_001327312.1">
    <property type="nucleotide sequence ID" value="NM_001339486.1"/>
</dbReference>
<dbReference type="RefSeq" id="NP_190655.2">
    <property type="nucleotide sequence ID" value="NM_114946.2"/>
</dbReference>
<dbReference type="SMR" id="Q8VZ37"/>
<dbReference type="BioGRID" id="9568">
    <property type="interactions" value="1"/>
</dbReference>
<dbReference type="FunCoup" id="Q8VZ37">
    <property type="interactions" value="3351"/>
</dbReference>
<dbReference type="IntAct" id="Q8VZ37">
    <property type="interactions" value="1"/>
</dbReference>
<dbReference type="STRING" id="3702.Q8VZ37"/>
<dbReference type="PaxDb" id="3702-AT3G50860.1"/>
<dbReference type="ProteomicsDB" id="244485"/>
<dbReference type="EnsemblPlants" id="AT3G50860.1">
    <property type="protein sequence ID" value="AT3G50860.1"/>
    <property type="gene ID" value="AT3G50860"/>
</dbReference>
<dbReference type="GeneID" id="824250"/>
<dbReference type="Gramene" id="AT3G50860.1">
    <property type="protein sequence ID" value="AT3G50860.1"/>
    <property type="gene ID" value="AT3G50860"/>
</dbReference>
<dbReference type="KEGG" id="ath:AT3G50860"/>
<dbReference type="Araport" id="AT3G50860"/>
<dbReference type="TAIR" id="AT3G50860">
    <property type="gene designation" value="AP-3 ALPHA"/>
</dbReference>
<dbReference type="eggNOG" id="KOG0936">
    <property type="taxonomic scope" value="Eukaryota"/>
</dbReference>
<dbReference type="HOGENOM" id="CLU_061221_2_2_1"/>
<dbReference type="InParanoid" id="Q8VZ37"/>
<dbReference type="PhylomeDB" id="Q8VZ37"/>
<dbReference type="PRO" id="PR:Q8VZ37"/>
<dbReference type="Proteomes" id="UP000006548">
    <property type="component" value="Chromosome 3"/>
</dbReference>
<dbReference type="ExpressionAtlas" id="Q8VZ37">
    <property type="expression patterns" value="baseline and differential"/>
</dbReference>
<dbReference type="GO" id="GO:0030123">
    <property type="term" value="C:AP-3 adaptor complex"/>
    <property type="evidence" value="ECO:0007669"/>
    <property type="project" value="InterPro"/>
</dbReference>
<dbReference type="GO" id="GO:0030659">
    <property type="term" value="C:cytoplasmic vesicle membrane"/>
    <property type="evidence" value="ECO:0007669"/>
    <property type="project" value="UniProtKB-SubCell"/>
</dbReference>
<dbReference type="GO" id="GO:0005794">
    <property type="term" value="C:Golgi apparatus"/>
    <property type="evidence" value="ECO:0007669"/>
    <property type="project" value="UniProtKB-SubCell"/>
</dbReference>
<dbReference type="GO" id="GO:0006896">
    <property type="term" value="P:Golgi to vacuole transport"/>
    <property type="evidence" value="ECO:0007669"/>
    <property type="project" value="InterPro"/>
</dbReference>
<dbReference type="GO" id="GO:0006886">
    <property type="term" value="P:intracellular protein transport"/>
    <property type="evidence" value="ECO:0007669"/>
    <property type="project" value="InterPro"/>
</dbReference>
<dbReference type="CDD" id="cd14834">
    <property type="entry name" value="AP3_sigma"/>
    <property type="match status" value="1"/>
</dbReference>
<dbReference type="FunFam" id="3.30.450.60:FF:000001">
    <property type="entry name" value="AP complex subunit sigma"/>
    <property type="match status" value="1"/>
</dbReference>
<dbReference type="Gene3D" id="3.30.450.60">
    <property type="match status" value="1"/>
</dbReference>
<dbReference type="InterPro" id="IPR016635">
    <property type="entry name" value="AP_complex_ssu"/>
</dbReference>
<dbReference type="InterPro" id="IPR022775">
    <property type="entry name" value="AP_mu_sigma_su"/>
</dbReference>
<dbReference type="InterPro" id="IPR027155">
    <property type="entry name" value="APS3"/>
</dbReference>
<dbReference type="InterPro" id="IPR000804">
    <property type="entry name" value="Clathrin_sm-chain_CS"/>
</dbReference>
<dbReference type="InterPro" id="IPR011012">
    <property type="entry name" value="Longin-like_dom_sf"/>
</dbReference>
<dbReference type="PANTHER" id="PTHR11753">
    <property type="entry name" value="ADAPTOR COMPLEXES SMALL SUBUNIT FAMILY"/>
    <property type="match status" value="1"/>
</dbReference>
<dbReference type="Pfam" id="PF01217">
    <property type="entry name" value="Clat_adaptor_s"/>
    <property type="match status" value="1"/>
</dbReference>
<dbReference type="PIRSF" id="PIRSF015588">
    <property type="entry name" value="AP_complex_sigma"/>
    <property type="match status" value="1"/>
</dbReference>
<dbReference type="SUPFAM" id="SSF64356">
    <property type="entry name" value="SNARE-like"/>
    <property type="match status" value="1"/>
</dbReference>
<dbReference type="PROSITE" id="PS00989">
    <property type="entry name" value="CLAT_ADAPTOR_S"/>
    <property type="match status" value="1"/>
</dbReference>
<evidence type="ECO:0000250" key="1"/>
<evidence type="ECO:0000269" key="2">
    <source>
    </source>
</evidence>
<evidence type="ECO:0000305" key="3"/>
<organism>
    <name type="scientific">Arabidopsis thaliana</name>
    <name type="common">Mouse-ear cress</name>
    <dbReference type="NCBI Taxonomy" id="3702"/>
    <lineage>
        <taxon>Eukaryota</taxon>
        <taxon>Viridiplantae</taxon>
        <taxon>Streptophyta</taxon>
        <taxon>Embryophyta</taxon>
        <taxon>Tracheophyta</taxon>
        <taxon>Spermatophyta</taxon>
        <taxon>Magnoliopsida</taxon>
        <taxon>eudicotyledons</taxon>
        <taxon>Gunneridae</taxon>
        <taxon>Pentapetalae</taxon>
        <taxon>rosids</taxon>
        <taxon>malvids</taxon>
        <taxon>Brassicales</taxon>
        <taxon>Brassicaceae</taxon>
        <taxon>Camelineae</taxon>
        <taxon>Arabidopsis</taxon>
    </lineage>
</organism>
<gene>
    <name type="ordered locus">At3g50860</name>
    <name type="ORF">F18B3.140</name>
</gene>
<sequence length="166" mass="18729">MIKAVMMMNTQGKPRLAKFYDYLPVEKQQELIRGVFSVLCSRPENVSNFLEIESLFGPDSRLVYKHYATLYFVLVFDGSENELAMLDLIQVLVETLDKCFSNVCELDIVFNYSKMHAVLDEIVFGGQVLETSSAEVMKAVEEISKLEAASNSISLVPKSVSGWRGR</sequence>
<name>AP3S_ARATH</name>
<keyword id="KW-0963">Cytoplasm</keyword>
<keyword id="KW-0968">Cytoplasmic vesicle</keyword>
<keyword id="KW-0333">Golgi apparatus</keyword>
<keyword id="KW-0472">Membrane</keyword>
<keyword id="KW-0653">Protein transport</keyword>
<keyword id="KW-1185">Reference proteome</keyword>
<keyword id="KW-0813">Transport</keyword>
<accession>Q8VZ37</accession>
<accession>Q9SVL3</accession>
<feature type="chain" id="PRO_0000397859" description="AP-3 complex subunit sigma">
    <location>
        <begin position="1"/>
        <end position="166"/>
    </location>
</feature>
<comment type="function">
    <text evidence="1">Part of the AP-3 complex, an adaptor-related complex which seems to be clathrin-associated. The complex is associated with the Golgi region as well as more peripheral structures. It facilitates the budding of vesicles from the Golgi membrane and may be directly involved in trafficking to the vacuole. It also function in maintaining the identity of lytic vacuoles and in regulating the transition between storage and lytic vacuoles (By similarity).</text>
</comment>
<comment type="subunit">
    <text>Adaptor protein complex 3 (AP-3) is a heterotetramer composed of two large adaptins (delta-type subunit and beta-type subunit), a medium adaptin (mu-type subunit) and a small adaptin (sigma-type subunit).</text>
</comment>
<comment type="subcellular location">
    <subcellularLocation>
        <location evidence="1">Cytoplasm</location>
    </subcellularLocation>
    <subcellularLocation>
        <location>Golgi apparatus</location>
    </subcellularLocation>
    <subcellularLocation>
        <location evidence="1">Cytoplasmic vesicle membrane</location>
        <topology evidence="1">Peripheral membrane protein</topology>
        <orientation evidence="1">Cytoplasmic side</orientation>
    </subcellularLocation>
    <text evidence="1">Component of the coat surrounding the cytoplasmic face of coated vesicles located at the Golgi complex.</text>
</comment>
<comment type="disruption phenotype">
    <text evidence="2">No obvious phenotype.</text>
</comment>
<comment type="similarity">
    <text evidence="3">Belongs to the adaptor complexes small subunit family.</text>
</comment>
<comment type="sequence caution" evidence="3">
    <conflict type="erroneous gene model prediction">
        <sequence resource="EMBL-CDS" id="CAB42915"/>
    </conflict>
</comment>
<protein>
    <recommendedName>
        <fullName>AP-3 complex subunit sigma</fullName>
    </recommendedName>
    <alternativeName>
        <fullName>AP-3 complex subunit sigma-3</fullName>
    </alternativeName>
    <alternativeName>
        <fullName>Adaptor-related protein complex 3 subunit sigma</fullName>
    </alternativeName>
    <alternativeName>
        <fullName>Sigma-adaptin 3</fullName>
    </alternativeName>
    <alternativeName>
        <fullName>Sigma3-adaptin</fullName>
    </alternativeName>
</protein>